<keyword id="KW-0067">ATP-binding</keyword>
<keyword id="KW-0520">NAD</keyword>
<keyword id="KW-0547">Nucleotide-binding</keyword>
<keyword id="KW-0548">Nucleotidyltransferase</keyword>
<keyword id="KW-0662">Pyridine nucleotide biosynthesis</keyword>
<keyword id="KW-0808">Transferase</keyword>
<dbReference type="EC" id="2.7.7.18" evidence="1"/>
<dbReference type="EMBL" id="CU207366">
    <property type="protein sequence ID" value="CAL68371.1"/>
    <property type="molecule type" value="Genomic_DNA"/>
</dbReference>
<dbReference type="RefSeq" id="WP_011711272.1">
    <property type="nucleotide sequence ID" value="NC_008571.1"/>
</dbReference>
<dbReference type="SMR" id="A0M6X6"/>
<dbReference type="STRING" id="411154.GFO_3431"/>
<dbReference type="KEGG" id="gfo:GFO_3431"/>
<dbReference type="eggNOG" id="COG1057">
    <property type="taxonomic scope" value="Bacteria"/>
</dbReference>
<dbReference type="HOGENOM" id="CLU_069765_3_3_10"/>
<dbReference type="OrthoDB" id="5295945at2"/>
<dbReference type="UniPathway" id="UPA00253">
    <property type="reaction ID" value="UER00332"/>
</dbReference>
<dbReference type="Proteomes" id="UP000000755">
    <property type="component" value="Chromosome"/>
</dbReference>
<dbReference type="GO" id="GO:0005524">
    <property type="term" value="F:ATP binding"/>
    <property type="evidence" value="ECO:0007669"/>
    <property type="project" value="UniProtKB-KW"/>
</dbReference>
<dbReference type="GO" id="GO:0004515">
    <property type="term" value="F:nicotinate-nucleotide adenylyltransferase activity"/>
    <property type="evidence" value="ECO:0007669"/>
    <property type="project" value="UniProtKB-UniRule"/>
</dbReference>
<dbReference type="GO" id="GO:0009435">
    <property type="term" value="P:NAD biosynthetic process"/>
    <property type="evidence" value="ECO:0007669"/>
    <property type="project" value="UniProtKB-UniRule"/>
</dbReference>
<dbReference type="CDD" id="cd02165">
    <property type="entry name" value="NMNAT"/>
    <property type="match status" value="1"/>
</dbReference>
<dbReference type="Gene3D" id="3.40.50.620">
    <property type="entry name" value="HUPs"/>
    <property type="match status" value="1"/>
</dbReference>
<dbReference type="HAMAP" id="MF_00244">
    <property type="entry name" value="NaMN_adenylyltr"/>
    <property type="match status" value="1"/>
</dbReference>
<dbReference type="InterPro" id="IPR004821">
    <property type="entry name" value="Cyt_trans-like"/>
</dbReference>
<dbReference type="InterPro" id="IPR005248">
    <property type="entry name" value="NadD/NMNAT"/>
</dbReference>
<dbReference type="InterPro" id="IPR014729">
    <property type="entry name" value="Rossmann-like_a/b/a_fold"/>
</dbReference>
<dbReference type="NCBIfam" id="TIGR00125">
    <property type="entry name" value="cyt_tran_rel"/>
    <property type="match status" value="1"/>
</dbReference>
<dbReference type="NCBIfam" id="TIGR00482">
    <property type="entry name" value="nicotinate (nicotinamide) nucleotide adenylyltransferase"/>
    <property type="match status" value="1"/>
</dbReference>
<dbReference type="PANTHER" id="PTHR39321">
    <property type="entry name" value="NICOTINATE-NUCLEOTIDE ADENYLYLTRANSFERASE-RELATED"/>
    <property type="match status" value="1"/>
</dbReference>
<dbReference type="PANTHER" id="PTHR39321:SF3">
    <property type="entry name" value="PHOSPHOPANTETHEINE ADENYLYLTRANSFERASE"/>
    <property type="match status" value="1"/>
</dbReference>
<dbReference type="Pfam" id="PF01467">
    <property type="entry name" value="CTP_transf_like"/>
    <property type="match status" value="1"/>
</dbReference>
<dbReference type="SUPFAM" id="SSF52374">
    <property type="entry name" value="Nucleotidylyl transferase"/>
    <property type="match status" value="1"/>
</dbReference>
<name>NADD_CHRFK</name>
<evidence type="ECO:0000255" key="1">
    <source>
        <dbReference type="HAMAP-Rule" id="MF_00244"/>
    </source>
</evidence>
<accession>A0M6X6</accession>
<organism>
    <name type="scientific">Christiangramia forsetii (strain DSM 17595 / CGMCC 1.15422 / KT0803)</name>
    <name type="common">Gramella forsetii</name>
    <dbReference type="NCBI Taxonomy" id="411154"/>
    <lineage>
        <taxon>Bacteria</taxon>
        <taxon>Pseudomonadati</taxon>
        <taxon>Bacteroidota</taxon>
        <taxon>Flavobacteriia</taxon>
        <taxon>Flavobacteriales</taxon>
        <taxon>Flavobacteriaceae</taxon>
        <taxon>Christiangramia</taxon>
    </lineage>
</organism>
<feature type="chain" id="PRO_0000336695" description="Probable nicotinate-nucleotide adenylyltransferase">
    <location>
        <begin position="1"/>
        <end position="194"/>
    </location>
</feature>
<sequence length="194" mass="22608">MNRKVGLFFGTFNPIHTGHLIIANHMAEYSDLEEIWLVVTPHNPHKKKSSLLDNHHRLEMVYRACEGYGKLKPSNIEFDLPQPNYTVNTLAHIQEKFPTNDFCLIMGEDNLKSFHKWKNSEVIIENHEIYVYPRIAPGKVADEFKTHAKITRVAAPIIEISSTFIRKSIKESKNIGPLLDEKVWKYIDEMNFYK</sequence>
<comment type="function">
    <text evidence="1">Catalyzes the reversible adenylation of nicotinate mononucleotide (NaMN) to nicotinic acid adenine dinucleotide (NaAD).</text>
</comment>
<comment type="catalytic activity">
    <reaction evidence="1">
        <text>nicotinate beta-D-ribonucleotide + ATP + H(+) = deamido-NAD(+) + diphosphate</text>
        <dbReference type="Rhea" id="RHEA:22860"/>
        <dbReference type="ChEBI" id="CHEBI:15378"/>
        <dbReference type="ChEBI" id="CHEBI:30616"/>
        <dbReference type="ChEBI" id="CHEBI:33019"/>
        <dbReference type="ChEBI" id="CHEBI:57502"/>
        <dbReference type="ChEBI" id="CHEBI:58437"/>
        <dbReference type="EC" id="2.7.7.18"/>
    </reaction>
</comment>
<comment type="pathway">
    <text evidence="1">Cofactor biosynthesis; NAD(+) biosynthesis; deamido-NAD(+) from nicotinate D-ribonucleotide: step 1/1.</text>
</comment>
<comment type="similarity">
    <text evidence="1">Belongs to the NadD family.</text>
</comment>
<gene>
    <name evidence="1" type="primary">nadD</name>
    <name type="ordered locus">GFO_3431</name>
</gene>
<proteinExistence type="inferred from homology"/>
<protein>
    <recommendedName>
        <fullName evidence="1">Probable nicotinate-nucleotide adenylyltransferase</fullName>
        <ecNumber evidence="1">2.7.7.18</ecNumber>
    </recommendedName>
    <alternativeName>
        <fullName evidence="1">Deamido-NAD(+) diphosphorylase</fullName>
    </alternativeName>
    <alternativeName>
        <fullName evidence="1">Deamido-NAD(+) pyrophosphorylase</fullName>
    </alternativeName>
    <alternativeName>
        <fullName evidence="1">Nicotinate mononucleotide adenylyltransferase</fullName>
        <shortName evidence="1">NaMN adenylyltransferase</shortName>
    </alternativeName>
</protein>
<reference key="1">
    <citation type="journal article" date="2006" name="Environ. Microbiol.">
        <title>Whole genome analysis of the marine Bacteroidetes'Gramella forsetii' reveals adaptations to degradation of polymeric organic matter.</title>
        <authorList>
            <person name="Bauer M."/>
            <person name="Kube M."/>
            <person name="Teeling H."/>
            <person name="Richter M."/>
            <person name="Lombardot T."/>
            <person name="Allers E."/>
            <person name="Wuerdemann C.A."/>
            <person name="Quast C."/>
            <person name="Kuhl H."/>
            <person name="Knaust F."/>
            <person name="Woebken D."/>
            <person name="Bischof K."/>
            <person name="Mussmann M."/>
            <person name="Choudhuri J.V."/>
            <person name="Meyer F."/>
            <person name="Reinhardt R."/>
            <person name="Amann R.I."/>
            <person name="Gloeckner F.O."/>
        </authorList>
    </citation>
    <scope>NUCLEOTIDE SEQUENCE [LARGE SCALE GENOMIC DNA]</scope>
    <source>
        <strain>DSM 17595 / CGMCC 1.15422 / KT0803</strain>
    </source>
</reference>